<proteinExistence type="inferred from homology"/>
<evidence type="ECO:0000255" key="1">
    <source>
        <dbReference type="HAMAP-Rule" id="MF_01155"/>
    </source>
</evidence>
<name>CBPM_SALPK</name>
<feature type="chain" id="PRO_1000137781" description="Chaperone modulatory protein CbpM">
    <location>
        <begin position="1"/>
        <end position="101"/>
    </location>
</feature>
<dbReference type="EMBL" id="FM200053">
    <property type="protein sequence ID" value="CAR59805.1"/>
    <property type="molecule type" value="Genomic_DNA"/>
</dbReference>
<dbReference type="RefSeq" id="WP_001284253.1">
    <property type="nucleotide sequence ID" value="NC_011147.1"/>
</dbReference>
<dbReference type="SMR" id="B5BBH3"/>
<dbReference type="KEGG" id="sek:SSPA1616"/>
<dbReference type="HOGENOM" id="CLU_144710_3_1_6"/>
<dbReference type="Proteomes" id="UP000001869">
    <property type="component" value="Chromosome"/>
</dbReference>
<dbReference type="Gene3D" id="1.10.1660.10">
    <property type="match status" value="1"/>
</dbReference>
<dbReference type="HAMAP" id="MF_01155">
    <property type="entry name" value="CbpM"/>
    <property type="match status" value="1"/>
</dbReference>
<dbReference type="InterPro" id="IPR022835">
    <property type="entry name" value="CbpM"/>
</dbReference>
<dbReference type="NCBIfam" id="NF007617">
    <property type="entry name" value="PRK10265.1"/>
    <property type="match status" value="1"/>
</dbReference>
<dbReference type="Pfam" id="PF13591">
    <property type="entry name" value="MerR_2"/>
    <property type="match status" value="1"/>
</dbReference>
<gene>
    <name evidence="1" type="primary">cbpM</name>
    <name type="ordered locus">SSPA1616</name>
</gene>
<protein>
    <recommendedName>
        <fullName evidence="1">Chaperone modulatory protein CbpM</fullName>
    </recommendedName>
</protein>
<accession>B5BBH3</accession>
<comment type="function">
    <text evidence="1">Interacts with CbpA and inhibits both the DnaJ-like co-chaperone activity and the DNA binding activity of CbpA. Together with CbpA, modulates the activity of the DnaK chaperone system. Does not inhibit the co-chaperone activity of DnaJ.</text>
</comment>
<comment type="similarity">
    <text evidence="1">Belongs to the CbpM family.</text>
</comment>
<organism>
    <name type="scientific">Salmonella paratyphi A (strain AKU_12601)</name>
    <dbReference type="NCBI Taxonomy" id="554290"/>
    <lineage>
        <taxon>Bacteria</taxon>
        <taxon>Pseudomonadati</taxon>
        <taxon>Pseudomonadota</taxon>
        <taxon>Gammaproteobacteria</taxon>
        <taxon>Enterobacterales</taxon>
        <taxon>Enterobacteriaceae</taxon>
        <taxon>Salmonella</taxon>
    </lineage>
</organism>
<reference key="1">
    <citation type="journal article" date="2009" name="BMC Genomics">
        <title>Pseudogene accumulation in the evolutionary histories of Salmonella enterica serovars Paratyphi A and Typhi.</title>
        <authorList>
            <person name="Holt K.E."/>
            <person name="Thomson N.R."/>
            <person name="Wain J."/>
            <person name="Langridge G.C."/>
            <person name="Hasan R."/>
            <person name="Bhutta Z.A."/>
            <person name="Quail M.A."/>
            <person name="Norbertczak H."/>
            <person name="Walker D."/>
            <person name="Simmonds M."/>
            <person name="White B."/>
            <person name="Bason N."/>
            <person name="Mungall K."/>
            <person name="Dougan G."/>
            <person name="Parkhill J."/>
        </authorList>
    </citation>
    <scope>NUCLEOTIDE SEQUENCE [LARGE SCALE GENOMIC DNA]</scope>
    <source>
        <strain>AKU_12601</strain>
    </source>
</reference>
<sequence>MANITVTFTITEFCLHTGVTEEELNEIVGLGVIEPYEDDNTDWQFDDRAASVVQRALRLREELALDWPGIAVALTLLEENSRLREENRLLLQRLSRFISHP</sequence>